<feature type="chain" id="PRO_1000019412" description="Cysteine desulfurase IscS">
    <location>
        <begin position="1"/>
        <end position="404"/>
    </location>
</feature>
<feature type="active site" description="Cysteine persulfide intermediate" evidence="1">
    <location>
        <position position="328"/>
    </location>
</feature>
<feature type="binding site" evidence="1">
    <location>
        <begin position="75"/>
        <end position="76"/>
    </location>
    <ligand>
        <name>pyridoxal 5'-phosphate</name>
        <dbReference type="ChEBI" id="CHEBI:597326"/>
    </ligand>
</feature>
<feature type="binding site" evidence="1">
    <location>
        <position position="155"/>
    </location>
    <ligand>
        <name>pyridoxal 5'-phosphate</name>
        <dbReference type="ChEBI" id="CHEBI:597326"/>
    </ligand>
</feature>
<feature type="binding site" evidence="1">
    <location>
        <position position="183"/>
    </location>
    <ligand>
        <name>pyridoxal 5'-phosphate</name>
        <dbReference type="ChEBI" id="CHEBI:597326"/>
    </ligand>
</feature>
<feature type="binding site" evidence="1">
    <location>
        <begin position="203"/>
        <end position="205"/>
    </location>
    <ligand>
        <name>pyridoxal 5'-phosphate</name>
        <dbReference type="ChEBI" id="CHEBI:597326"/>
    </ligand>
</feature>
<feature type="binding site" evidence="1">
    <location>
        <position position="243"/>
    </location>
    <ligand>
        <name>pyridoxal 5'-phosphate</name>
        <dbReference type="ChEBI" id="CHEBI:597326"/>
    </ligand>
</feature>
<feature type="binding site" description="via persulfide group" evidence="1">
    <location>
        <position position="328"/>
    </location>
    <ligand>
        <name>[2Fe-2S] cluster</name>
        <dbReference type="ChEBI" id="CHEBI:190135"/>
        <note>ligand shared with IscU</note>
    </ligand>
</feature>
<feature type="modified residue" description="N6-(pyridoxal phosphate)lysine" evidence="1">
    <location>
        <position position="206"/>
    </location>
</feature>
<evidence type="ECO:0000255" key="1">
    <source>
        <dbReference type="HAMAP-Rule" id="MF_00331"/>
    </source>
</evidence>
<reference key="1">
    <citation type="journal article" date="2007" name="Genome Biol.">
        <title>Characterization and modeling of the Haemophilus influenzae core and supragenomes based on the complete genomic sequences of Rd and 12 clinical nontypeable strains.</title>
        <authorList>
            <person name="Hogg J.S."/>
            <person name="Hu F.Z."/>
            <person name="Janto B."/>
            <person name="Boissy R."/>
            <person name="Hayes J."/>
            <person name="Keefe R."/>
            <person name="Post J.C."/>
            <person name="Ehrlich G.D."/>
        </authorList>
    </citation>
    <scope>NUCLEOTIDE SEQUENCE [LARGE SCALE GENOMIC DNA]</scope>
    <source>
        <strain>PittGG</strain>
    </source>
</reference>
<organism>
    <name type="scientific">Haemophilus influenzae (strain PittGG)</name>
    <dbReference type="NCBI Taxonomy" id="374931"/>
    <lineage>
        <taxon>Bacteria</taxon>
        <taxon>Pseudomonadati</taxon>
        <taxon>Pseudomonadota</taxon>
        <taxon>Gammaproteobacteria</taxon>
        <taxon>Pasteurellales</taxon>
        <taxon>Pasteurellaceae</taxon>
        <taxon>Haemophilus</taxon>
    </lineage>
</organism>
<gene>
    <name evidence="1" type="primary">iscS</name>
    <name type="ordered locus">CGSHiGG_04700</name>
</gene>
<sequence length="404" mass="44855">MKLPIYLDYAATCPVDERVAKKMMAFLTIDGTFGNPASRSHKFGWQAEEAVDIARNQIADLIGADSREIVFTSGATESDNLAIKGAAHFYQTKGKHIITCKTEHKAVLDTCRQLEREGFEVTYLSPEADGLIDLEKFKAALRPDTILASIMHANNEIGVLQDIKAIGELCRANKTIFHVDATQSVGKVEINLEELAVDLMSMSSHKLYGPKGVGALYVRRKPRVRLEAIIHGGGHERGMRSGTLPVHQIVGMGEAYRIAKEEMASEMPRLKALRDRLYNGLKDIEETYVNGSMEHRLDSNLNISFNYVEGESLMMALRDIAVSSGSACTSASLEPSYVLRALGLNDELAHSSIRFTLGRYTTEEEIDYTINLMKGAVEKLRALSPLWDMFKEGIDLNTIEWSAH</sequence>
<proteinExistence type="inferred from homology"/>
<name>ISCS_HAEIG</name>
<dbReference type="EC" id="2.8.1.7" evidence="1"/>
<dbReference type="EMBL" id="CP000672">
    <property type="protein sequence ID" value="ABQ99886.1"/>
    <property type="molecule type" value="Genomic_DNA"/>
</dbReference>
<dbReference type="SMR" id="A5UGI1"/>
<dbReference type="KEGG" id="hiq:CGSHiGG_04700"/>
<dbReference type="HOGENOM" id="CLU_003433_0_2_6"/>
<dbReference type="UniPathway" id="UPA00266"/>
<dbReference type="Proteomes" id="UP000001990">
    <property type="component" value="Chromosome"/>
</dbReference>
<dbReference type="GO" id="GO:1990221">
    <property type="term" value="C:L-cysteine desulfurase complex"/>
    <property type="evidence" value="ECO:0007669"/>
    <property type="project" value="UniProtKB-ARBA"/>
</dbReference>
<dbReference type="GO" id="GO:0051537">
    <property type="term" value="F:2 iron, 2 sulfur cluster binding"/>
    <property type="evidence" value="ECO:0007669"/>
    <property type="project" value="UniProtKB-UniRule"/>
</dbReference>
<dbReference type="GO" id="GO:0031071">
    <property type="term" value="F:cysteine desulfurase activity"/>
    <property type="evidence" value="ECO:0007669"/>
    <property type="project" value="UniProtKB-UniRule"/>
</dbReference>
<dbReference type="GO" id="GO:0046872">
    <property type="term" value="F:metal ion binding"/>
    <property type="evidence" value="ECO:0007669"/>
    <property type="project" value="UniProtKB-KW"/>
</dbReference>
<dbReference type="GO" id="GO:0030170">
    <property type="term" value="F:pyridoxal phosphate binding"/>
    <property type="evidence" value="ECO:0007669"/>
    <property type="project" value="UniProtKB-UniRule"/>
</dbReference>
<dbReference type="GO" id="GO:0044571">
    <property type="term" value="P:[2Fe-2S] cluster assembly"/>
    <property type="evidence" value="ECO:0007669"/>
    <property type="project" value="UniProtKB-UniRule"/>
</dbReference>
<dbReference type="FunFam" id="3.40.640.10:FF:000003">
    <property type="entry name" value="Cysteine desulfurase IscS"/>
    <property type="match status" value="1"/>
</dbReference>
<dbReference type="FunFam" id="3.90.1150.10:FF:000002">
    <property type="entry name" value="Cysteine desulfurase IscS"/>
    <property type="match status" value="1"/>
</dbReference>
<dbReference type="Gene3D" id="3.90.1150.10">
    <property type="entry name" value="Aspartate Aminotransferase, domain 1"/>
    <property type="match status" value="1"/>
</dbReference>
<dbReference type="Gene3D" id="3.40.640.10">
    <property type="entry name" value="Type I PLP-dependent aspartate aminotransferase-like (Major domain)"/>
    <property type="match status" value="1"/>
</dbReference>
<dbReference type="HAMAP" id="MF_00331">
    <property type="entry name" value="Cys_desulf_IscS"/>
    <property type="match status" value="1"/>
</dbReference>
<dbReference type="InterPro" id="IPR000192">
    <property type="entry name" value="Aminotrans_V_dom"/>
</dbReference>
<dbReference type="InterPro" id="IPR020578">
    <property type="entry name" value="Aminotrans_V_PyrdxlP_BS"/>
</dbReference>
<dbReference type="InterPro" id="IPR010240">
    <property type="entry name" value="Cys_deSase_IscS"/>
</dbReference>
<dbReference type="InterPro" id="IPR016454">
    <property type="entry name" value="Cysteine_dSase"/>
</dbReference>
<dbReference type="InterPro" id="IPR015424">
    <property type="entry name" value="PyrdxlP-dep_Trfase"/>
</dbReference>
<dbReference type="InterPro" id="IPR015421">
    <property type="entry name" value="PyrdxlP-dep_Trfase_major"/>
</dbReference>
<dbReference type="InterPro" id="IPR015422">
    <property type="entry name" value="PyrdxlP-dep_Trfase_small"/>
</dbReference>
<dbReference type="NCBIfam" id="TIGR02006">
    <property type="entry name" value="IscS"/>
    <property type="match status" value="1"/>
</dbReference>
<dbReference type="NCBIfam" id="NF002806">
    <property type="entry name" value="PRK02948.1"/>
    <property type="match status" value="1"/>
</dbReference>
<dbReference type="NCBIfam" id="NF010611">
    <property type="entry name" value="PRK14012.1"/>
    <property type="match status" value="1"/>
</dbReference>
<dbReference type="PANTHER" id="PTHR11601:SF34">
    <property type="entry name" value="CYSTEINE DESULFURASE"/>
    <property type="match status" value="1"/>
</dbReference>
<dbReference type="PANTHER" id="PTHR11601">
    <property type="entry name" value="CYSTEINE DESULFURYLASE FAMILY MEMBER"/>
    <property type="match status" value="1"/>
</dbReference>
<dbReference type="Pfam" id="PF00266">
    <property type="entry name" value="Aminotran_5"/>
    <property type="match status" value="1"/>
</dbReference>
<dbReference type="PIRSF" id="PIRSF005572">
    <property type="entry name" value="NifS"/>
    <property type="match status" value="1"/>
</dbReference>
<dbReference type="SUPFAM" id="SSF53383">
    <property type="entry name" value="PLP-dependent transferases"/>
    <property type="match status" value="1"/>
</dbReference>
<dbReference type="PROSITE" id="PS00595">
    <property type="entry name" value="AA_TRANSFER_CLASS_5"/>
    <property type="match status" value="1"/>
</dbReference>
<comment type="function">
    <text evidence="1">Master enzyme that delivers sulfur to a number of partners involved in Fe-S cluster assembly, tRNA modification or cofactor biosynthesis. Catalyzes the removal of elemental sulfur atoms from cysteine to produce alanine. Functions as a sulfur delivery protein for Fe-S cluster synthesis onto IscU, an Fe-S scaffold assembly protein, as well as other S acceptor proteins.</text>
</comment>
<comment type="catalytic activity">
    <reaction evidence="1">
        <text>(sulfur carrier)-H + L-cysteine = (sulfur carrier)-SH + L-alanine</text>
        <dbReference type="Rhea" id="RHEA:43892"/>
        <dbReference type="Rhea" id="RHEA-COMP:14737"/>
        <dbReference type="Rhea" id="RHEA-COMP:14739"/>
        <dbReference type="ChEBI" id="CHEBI:29917"/>
        <dbReference type="ChEBI" id="CHEBI:35235"/>
        <dbReference type="ChEBI" id="CHEBI:57972"/>
        <dbReference type="ChEBI" id="CHEBI:64428"/>
        <dbReference type="EC" id="2.8.1.7"/>
    </reaction>
</comment>
<comment type="cofactor">
    <cofactor evidence="1">
        <name>pyridoxal 5'-phosphate</name>
        <dbReference type="ChEBI" id="CHEBI:597326"/>
    </cofactor>
</comment>
<comment type="pathway">
    <text evidence="1">Cofactor biosynthesis; iron-sulfur cluster biosynthesis.</text>
</comment>
<comment type="subunit">
    <text evidence="1">Homodimer. Forms a heterotetramer with IscU, interacts with other sulfur acceptors.</text>
</comment>
<comment type="subcellular location">
    <subcellularLocation>
        <location evidence="1">Cytoplasm</location>
    </subcellularLocation>
</comment>
<comment type="similarity">
    <text evidence="1">Belongs to the class-V pyridoxal-phosphate-dependent aminotransferase family. NifS/IscS subfamily.</text>
</comment>
<keyword id="KW-0001">2Fe-2S</keyword>
<keyword id="KW-0963">Cytoplasm</keyword>
<keyword id="KW-0408">Iron</keyword>
<keyword id="KW-0411">Iron-sulfur</keyword>
<keyword id="KW-0479">Metal-binding</keyword>
<keyword id="KW-0663">Pyridoxal phosphate</keyword>
<keyword id="KW-0808">Transferase</keyword>
<accession>A5UGI1</accession>
<protein>
    <recommendedName>
        <fullName evidence="1">Cysteine desulfurase IscS</fullName>
        <ecNumber evidence="1">2.8.1.7</ecNumber>
    </recommendedName>
</protein>